<protein>
    <recommendedName>
        <fullName evidence="1">Large ribosomal subunit protein uL22</fullName>
    </recommendedName>
    <alternativeName>
        <fullName evidence="2">50S ribosomal protein L22</fullName>
    </alternativeName>
</protein>
<accession>Q92QG5</accession>
<feature type="chain" id="PRO_0000125210" description="Large ribosomal subunit protein uL22">
    <location>
        <begin position="1"/>
        <end position="129"/>
    </location>
</feature>
<comment type="function">
    <text evidence="1">This protein binds specifically to 23S rRNA; its binding is stimulated by other ribosomal proteins, e.g. L4, L17, and L20. It is important during the early stages of 50S assembly. It makes multiple contacts with different domains of the 23S rRNA in the assembled 50S subunit and ribosome (By similarity).</text>
</comment>
<comment type="function">
    <text evidence="1">The globular domain of the protein is located near the polypeptide exit tunnel on the outside of the subunit, while an extended beta-hairpin is found that lines the wall of the exit tunnel in the center of the 70S ribosome.</text>
</comment>
<comment type="subunit">
    <text evidence="1">Part of the 50S ribosomal subunit.</text>
</comment>
<comment type="similarity">
    <text evidence="1">Belongs to the universal ribosomal protein uL22 family.</text>
</comment>
<reference key="1">
    <citation type="journal article" date="2001" name="Proc. Natl. Acad. Sci. U.S.A.">
        <title>Analysis of the chromosome sequence of the legume symbiont Sinorhizobium meliloti strain 1021.</title>
        <authorList>
            <person name="Capela D."/>
            <person name="Barloy-Hubler F."/>
            <person name="Gouzy J."/>
            <person name="Bothe G."/>
            <person name="Ampe F."/>
            <person name="Batut J."/>
            <person name="Boistard P."/>
            <person name="Becker A."/>
            <person name="Boutry M."/>
            <person name="Cadieu E."/>
            <person name="Dreano S."/>
            <person name="Gloux S."/>
            <person name="Godrie T."/>
            <person name="Goffeau A."/>
            <person name="Kahn D."/>
            <person name="Kiss E."/>
            <person name="Lelaure V."/>
            <person name="Masuy D."/>
            <person name="Pohl T."/>
            <person name="Portetelle D."/>
            <person name="Puehler A."/>
            <person name="Purnelle B."/>
            <person name="Ramsperger U."/>
            <person name="Renard C."/>
            <person name="Thebault P."/>
            <person name="Vandenbol M."/>
            <person name="Weidner S."/>
            <person name="Galibert F."/>
        </authorList>
    </citation>
    <scope>NUCLEOTIDE SEQUENCE [LARGE SCALE GENOMIC DNA]</scope>
    <source>
        <strain>1021</strain>
    </source>
</reference>
<reference key="2">
    <citation type="journal article" date="2001" name="Science">
        <title>The composite genome of the legume symbiont Sinorhizobium meliloti.</title>
        <authorList>
            <person name="Galibert F."/>
            <person name="Finan T.M."/>
            <person name="Long S.R."/>
            <person name="Puehler A."/>
            <person name="Abola P."/>
            <person name="Ampe F."/>
            <person name="Barloy-Hubler F."/>
            <person name="Barnett M.J."/>
            <person name="Becker A."/>
            <person name="Boistard P."/>
            <person name="Bothe G."/>
            <person name="Boutry M."/>
            <person name="Bowser L."/>
            <person name="Buhrmester J."/>
            <person name="Cadieu E."/>
            <person name="Capela D."/>
            <person name="Chain P."/>
            <person name="Cowie A."/>
            <person name="Davis R.W."/>
            <person name="Dreano S."/>
            <person name="Federspiel N.A."/>
            <person name="Fisher R.F."/>
            <person name="Gloux S."/>
            <person name="Godrie T."/>
            <person name="Goffeau A."/>
            <person name="Golding B."/>
            <person name="Gouzy J."/>
            <person name="Gurjal M."/>
            <person name="Hernandez-Lucas I."/>
            <person name="Hong A."/>
            <person name="Huizar L."/>
            <person name="Hyman R.W."/>
            <person name="Jones T."/>
            <person name="Kahn D."/>
            <person name="Kahn M.L."/>
            <person name="Kalman S."/>
            <person name="Keating D.H."/>
            <person name="Kiss E."/>
            <person name="Komp C."/>
            <person name="Lelaure V."/>
            <person name="Masuy D."/>
            <person name="Palm C."/>
            <person name="Peck M.C."/>
            <person name="Pohl T.M."/>
            <person name="Portetelle D."/>
            <person name="Purnelle B."/>
            <person name="Ramsperger U."/>
            <person name="Surzycki R."/>
            <person name="Thebault P."/>
            <person name="Vandenbol M."/>
            <person name="Vorhoelter F.J."/>
            <person name="Weidner S."/>
            <person name="Wells D.H."/>
            <person name="Wong K."/>
            <person name="Yeh K.-C."/>
            <person name="Batut J."/>
        </authorList>
    </citation>
    <scope>NUCLEOTIDE SEQUENCE [LARGE SCALE GENOMIC DNA]</scope>
    <source>
        <strain>1021</strain>
    </source>
</reference>
<gene>
    <name evidence="1" type="primary">rplV</name>
    <name type="ordered locus">R01361</name>
    <name type="ORF">SMc01304</name>
</gene>
<dbReference type="EMBL" id="AL591688">
    <property type="protein sequence ID" value="CAC45940.1"/>
    <property type="molecule type" value="Genomic_DNA"/>
</dbReference>
<dbReference type="RefSeq" id="NP_385467.1">
    <property type="nucleotide sequence ID" value="NC_003047.1"/>
</dbReference>
<dbReference type="RefSeq" id="WP_003536535.1">
    <property type="nucleotide sequence ID" value="NC_003047.1"/>
</dbReference>
<dbReference type="SMR" id="Q92QG5"/>
<dbReference type="EnsemblBacteria" id="CAC45940">
    <property type="protein sequence ID" value="CAC45940"/>
    <property type="gene ID" value="SMc01304"/>
</dbReference>
<dbReference type="GeneID" id="89575685"/>
<dbReference type="KEGG" id="sme:SMc01304"/>
<dbReference type="PATRIC" id="fig|266834.11.peg.2777"/>
<dbReference type="eggNOG" id="COG0091">
    <property type="taxonomic scope" value="Bacteria"/>
</dbReference>
<dbReference type="HOGENOM" id="CLU_083987_3_0_5"/>
<dbReference type="OrthoDB" id="9805969at2"/>
<dbReference type="Proteomes" id="UP000001976">
    <property type="component" value="Chromosome"/>
</dbReference>
<dbReference type="GO" id="GO:0022625">
    <property type="term" value="C:cytosolic large ribosomal subunit"/>
    <property type="evidence" value="ECO:0007669"/>
    <property type="project" value="TreeGrafter"/>
</dbReference>
<dbReference type="GO" id="GO:0019843">
    <property type="term" value="F:rRNA binding"/>
    <property type="evidence" value="ECO:0007669"/>
    <property type="project" value="UniProtKB-UniRule"/>
</dbReference>
<dbReference type="GO" id="GO:0003735">
    <property type="term" value="F:structural constituent of ribosome"/>
    <property type="evidence" value="ECO:0007669"/>
    <property type="project" value="InterPro"/>
</dbReference>
<dbReference type="GO" id="GO:0006412">
    <property type="term" value="P:translation"/>
    <property type="evidence" value="ECO:0007669"/>
    <property type="project" value="UniProtKB-UniRule"/>
</dbReference>
<dbReference type="CDD" id="cd00336">
    <property type="entry name" value="Ribosomal_L22"/>
    <property type="match status" value="1"/>
</dbReference>
<dbReference type="Gene3D" id="3.90.470.10">
    <property type="entry name" value="Ribosomal protein L22/L17"/>
    <property type="match status" value="1"/>
</dbReference>
<dbReference type="HAMAP" id="MF_01331_B">
    <property type="entry name" value="Ribosomal_uL22_B"/>
    <property type="match status" value="1"/>
</dbReference>
<dbReference type="InterPro" id="IPR001063">
    <property type="entry name" value="Ribosomal_uL22"/>
</dbReference>
<dbReference type="InterPro" id="IPR005727">
    <property type="entry name" value="Ribosomal_uL22_bac/chlpt-type"/>
</dbReference>
<dbReference type="InterPro" id="IPR047867">
    <property type="entry name" value="Ribosomal_uL22_bac/org-type"/>
</dbReference>
<dbReference type="InterPro" id="IPR018260">
    <property type="entry name" value="Ribosomal_uL22_CS"/>
</dbReference>
<dbReference type="InterPro" id="IPR036394">
    <property type="entry name" value="Ribosomal_uL22_sf"/>
</dbReference>
<dbReference type="NCBIfam" id="TIGR01044">
    <property type="entry name" value="rplV_bact"/>
    <property type="match status" value="1"/>
</dbReference>
<dbReference type="PANTHER" id="PTHR13501">
    <property type="entry name" value="CHLOROPLAST 50S RIBOSOMAL PROTEIN L22-RELATED"/>
    <property type="match status" value="1"/>
</dbReference>
<dbReference type="PANTHER" id="PTHR13501:SF8">
    <property type="entry name" value="LARGE RIBOSOMAL SUBUNIT PROTEIN UL22M"/>
    <property type="match status" value="1"/>
</dbReference>
<dbReference type="Pfam" id="PF00237">
    <property type="entry name" value="Ribosomal_L22"/>
    <property type="match status" value="1"/>
</dbReference>
<dbReference type="SUPFAM" id="SSF54843">
    <property type="entry name" value="Ribosomal protein L22"/>
    <property type="match status" value="1"/>
</dbReference>
<dbReference type="PROSITE" id="PS00464">
    <property type="entry name" value="RIBOSOMAL_L22"/>
    <property type="match status" value="1"/>
</dbReference>
<proteinExistence type="inferred from homology"/>
<evidence type="ECO:0000255" key="1">
    <source>
        <dbReference type="HAMAP-Rule" id="MF_01331"/>
    </source>
</evidence>
<evidence type="ECO:0000305" key="2"/>
<keyword id="KW-1185">Reference proteome</keyword>
<keyword id="KW-0687">Ribonucleoprotein</keyword>
<keyword id="KW-0689">Ribosomal protein</keyword>
<keyword id="KW-0694">RNA-binding</keyword>
<keyword id="KW-0699">rRNA-binding</keyword>
<name>RL22_RHIME</name>
<sequence length="129" mass="14181">MGKAKAERRLKDNEAQAVARTIRVSPQKLNLVAALIRGKKVDRALAELEFSRKRIAGTVKKTLESAIANAENNHDLDVDSLIVAEAFVGKSIVMKRFHARGRGRASRVEKPFAHLTIVVREVEAKGEAA</sequence>
<organism>
    <name type="scientific">Rhizobium meliloti (strain 1021)</name>
    <name type="common">Ensifer meliloti</name>
    <name type="synonym">Sinorhizobium meliloti</name>
    <dbReference type="NCBI Taxonomy" id="266834"/>
    <lineage>
        <taxon>Bacteria</taxon>
        <taxon>Pseudomonadati</taxon>
        <taxon>Pseudomonadota</taxon>
        <taxon>Alphaproteobacteria</taxon>
        <taxon>Hyphomicrobiales</taxon>
        <taxon>Rhizobiaceae</taxon>
        <taxon>Sinorhizobium/Ensifer group</taxon>
        <taxon>Sinorhizobium</taxon>
    </lineage>
</organism>